<dbReference type="EC" id="3.4.24.-" evidence="2"/>
<dbReference type="EC" id="3.6.-.-" evidence="2"/>
<dbReference type="EMBL" id="BC105322">
    <property type="protein sequence ID" value="AAI05323.1"/>
    <property type="molecule type" value="mRNA"/>
</dbReference>
<dbReference type="RefSeq" id="NP_001039676.1">
    <property type="nucleotide sequence ID" value="NM_001046211.1"/>
</dbReference>
<dbReference type="BMRB" id="Q2KJI7"/>
<dbReference type="SMR" id="Q2KJI7"/>
<dbReference type="FunCoup" id="Q2KJI7">
    <property type="interactions" value="2923"/>
</dbReference>
<dbReference type="STRING" id="9913.ENSBTAP00000030993"/>
<dbReference type="MEROPS" id="M41.016"/>
<dbReference type="PaxDb" id="9913-ENSBTAP00000030993"/>
<dbReference type="GeneID" id="515757"/>
<dbReference type="KEGG" id="bta:515757"/>
<dbReference type="CTD" id="10939"/>
<dbReference type="VEuPathDB" id="HostDB:ENSBTAG00000011250"/>
<dbReference type="eggNOG" id="KOG0731">
    <property type="taxonomic scope" value="Eukaryota"/>
</dbReference>
<dbReference type="HOGENOM" id="CLU_000688_23_1_1"/>
<dbReference type="InParanoid" id="Q2KJI7"/>
<dbReference type="OMA" id="ARQKGNF"/>
<dbReference type="OrthoDB" id="1413014at2759"/>
<dbReference type="TreeFam" id="TF105004"/>
<dbReference type="Reactome" id="R-BTA-8949664">
    <property type="pathway name" value="Processing of SMDT1"/>
</dbReference>
<dbReference type="Reactome" id="R-BTA-9837999">
    <property type="pathway name" value="Mitochondrial protein degradation"/>
</dbReference>
<dbReference type="Proteomes" id="UP000009136">
    <property type="component" value="Chromosome 24"/>
</dbReference>
<dbReference type="Bgee" id="ENSBTAG00000011250">
    <property type="expression patterns" value="Expressed in infraspinatus muscle and 102 other cell types or tissues"/>
</dbReference>
<dbReference type="GO" id="GO:0005745">
    <property type="term" value="C:m-AAA complex"/>
    <property type="evidence" value="ECO:0000250"/>
    <property type="project" value="UniProtKB"/>
</dbReference>
<dbReference type="GO" id="GO:0005743">
    <property type="term" value="C:mitochondrial inner membrane"/>
    <property type="evidence" value="ECO:0000250"/>
    <property type="project" value="UniProtKB"/>
</dbReference>
<dbReference type="GO" id="GO:0005524">
    <property type="term" value="F:ATP binding"/>
    <property type="evidence" value="ECO:0007669"/>
    <property type="project" value="UniProtKB-KW"/>
</dbReference>
<dbReference type="GO" id="GO:0016887">
    <property type="term" value="F:ATP hydrolysis activity"/>
    <property type="evidence" value="ECO:0000250"/>
    <property type="project" value="UniProtKB"/>
</dbReference>
<dbReference type="GO" id="GO:0004176">
    <property type="term" value="F:ATP-dependent peptidase activity"/>
    <property type="evidence" value="ECO:0007669"/>
    <property type="project" value="InterPro"/>
</dbReference>
<dbReference type="GO" id="GO:0140567">
    <property type="term" value="F:membrane protein dislocase activity"/>
    <property type="evidence" value="ECO:0000250"/>
    <property type="project" value="UniProtKB"/>
</dbReference>
<dbReference type="GO" id="GO:0004222">
    <property type="term" value="F:metalloendopeptidase activity"/>
    <property type="evidence" value="ECO:0000250"/>
    <property type="project" value="UniProtKB"/>
</dbReference>
<dbReference type="GO" id="GO:0008237">
    <property type="term" value="F:metallopeptidase activity"/>
    <property type="evidence" value="ECO:0000250"/>
    <property type="project" value="UniProtKB"/>
</dbReference>
<dbReference type="GO" id="GO:0008270">
    <property type="term" value="F:zinc ion binding"/>
    <property type="evidence" value="ECO:0007669"/>
    <property type="project" value="InterPro"/>
</dbReference>
<dbReference type="GO" id="GO:0007409">
    <property type="term" value="P:axonogenesis"/>
    <property type="evidence" value="ECO:0000250"/>
    <property type="project" value="UniProtKB"/>
</dbReference>
<dbReference type="GO" id="GO:0036444">
    <property type="term" value="P:calcium import into the mitochondrion"/>
    <property type="evidence" value="ECO:0000250"/>
    <property type="project" value="UniProtKB"/>
</dbReference>
<dbReference type="GO" id="GO:0072753">
    <property type="term" value="P:cellular response to glutathione"/>
    <property type="evidence" value="ECO:0000250"/>
    <property type="project" value="UniProtKB"/>
</dbReference>
<dbReference type="GO" id="GO:0051560">
    <property type="term" value="P:mitochondrial calcium ion homeostasis"/>
    <property type="evidence" value="ECO:0000250"/>
    <property type="project" value="UniProtKB"/>
</dbReference>
<dbReference type="GO" id="GO:0034982">
    <property type="term" value="P:mitochondrial protein processing"/>
    <property type="evidence" value="ECO:0000318"/>
    <property type="project" value="GO_Central"/>
</dbReference>
<dbReference type="GO" id="GO:0141164">
    <property type="term" value="P:mitochondrial protein quality control"/>
    <property type="evidence" value="ECO:0000250"/>
    <property type="project" value="UniProtKB"/>
</dbReference>
<dbReference type="GO" id="GO:0016540">
    <property type="term" value="P:protein autoprocessing"/>
    <property type="evidence" value="ECO:0000250"/>
    <property type="project" value="UniProtKB"/>
</dbReference>
<dbReference type="GO" id="GO:0030163">
    <property type="term" value="P:protein catabolic process"/>
    <property type="evidence" value="ECO:0000250"/>
    <property type="project" value="UniProtKB"/>
</dbReference>
<dbReference type="GO" id="GO:0016485">
    <property type="term" value="P:protein processing"/>
    <property type="evidence" value="ECO:0000250"/>
    <property type="project" value="UniProtKB"/>
</dbReference>
<dbReference type="GO" id="GO:0006508">
    <property type="term" value="P:proteolysis"/>
    <property type="evidence" value="ECO:0000250"/>
    <property type="project" value="UniProtKB"/>
</dbReference>
<dbReference type="GO" id="GO:0110097">
    <property type="term" value="P:regulation of calcium import into the mitochondrion"/>
    <property type="evidence" value="ECO:0000250"/>
    <property type="project" value="UniProtKB"/>
</dbReference>
<dbReference type="CDD" id="cd19501">
    <property type="entry name" value="RecA-like_FtsH"/>
    <property type="match status" value="1"/>
</dbReference>
<dbReference type="FunFam" id="1.10.8.60:FF:000019">
    <property type="entry name" value="AFG3-like AAA ATPase 2"/>
    <property type="match status" value="1"/>
</dbReference>
<dbReference type="FunFam" id="1.20.58.760:FF:000003">
    <property type="entry name" value="AFG3-like AAA ATPase 2"/>
    <property type="match status" value="1"/>
</dbReference>
<dbReference type="FunFam" id="3.40.1690.20:FF:000001">
    <property type="entry name" value="AFG3-like AAA ATPase 2"/>
    <property type="match status" value="1"/>
</dbReference>
<dbReference type="FunFam" id="3.40.50.300:FF:000001">
    <property type="entry name" value="ATP-dependent zinc metalloprotease FtsH"/>
    <property type="match status" value="1"/>
</dbReference>
<dbReference type="Gene3D" id="1.10.8.60">
    <property type="match status" value="1"/>
</dbReference>
<dbReference type="Gene3D" id="3.40.1690.20">
    <property type="match status" value="1"/>
</dbReference>
<dbReference type="Gene3D" id="3.40.50.300">
    <property type="entry name" value="P-loop containing nucleotide triphosphate hydrolases"/>
    <property type="match status" value="1"/>
</dbReference>
<dbReference type="Gene3D" id="1.20.58.760">
    <property type="entry name" value="Peptidase M41"/>
    <property type="match status" value="1"/>
</dbReference>
<dbReference type="HAMAP" id="MF_01458">
    <property type="entry name" value="FtsH"/>
    <property type="match status" value="1"/>
</dbReference>
<dbReference type="InterPro" id="IPR003593">
    <property type="entry name" value="AAA+_ATPase"/>
</dbReference>
<dbReference type="InterPro" id="IPR041569">
    <property type="entry name" value="AAA_lid_3"/>
</dbReference>
<dbReference type="InterPro" id="IPR050928">
    <property type="entry name" value="ATP-dep_Zn_Metalloprotease"/>
</dbReference>
<dbReference type="InterPro" id="IPR003959">
    <property type="entry name" value="ATPase_AAA_core"/>
</dbReference>
<dbReference type="InterPro" id="IPR003960">
    <property type="entry name" value="ATPase_AAA_CS"/>
</dbReference>
<dbReference type="InterPro" id="IPR005936">
    <property type="entry name" value="FtsH"/>
</dbReference>
<dbReference type="InterPro" id="IPR027417">
    <property type="entry name" value="P-loop_NTPase"/>
</dbReference>
<dbReference type="InterPro" id="IPR011546">
    <property type="entry name" value="Pept_M41_FtsH_extracell"/>
</dbReference>
<dbReference type="InterPro" id="IPR000642">
    <property type="entry name" value="Peptidase_M41"/>
</dbReference>
<dbReference type="InterPro" id="IPR037219">
    <property type="entry name" value="Peptidase_M41-like"/>
</dbReference>
<dbReference type="NCBIfam" id="TIGR01241">
    <property type="entry name" value="FtsH_fam"/>
    <property type="match status" value="1"/>
</dbReference>
<dbReference type="PANTHER" id="PTHR43655:SF9">
    <property type="entry name" value="AFG3-LIKE PROTEIN 2"/>
    <property type="match status" value="1"/>
</dbReference>
<dbReference type="PANTHER" id="PTHR43655">
    <property type="entry name" value="ATP-DEPENDENT PROTEASE"/>
    <property type="match status" value="1"/>
</dbReference>
<dbReference type="Pfam" id="PF00004">
    <property type="entry name" value="AAA"/>
    <property type="match status" value="1"/>
</dbReference>
<dbReference type="Pfam" id="PF17862">
    <property type="entry name" value="AAA_lid_3"/>
    <property type="match status" value="1"/>
</dbReference>
<dbReference type="Pfam" id="PF06480">
    <property type="entry name" value="FtsH_ext"/>
    <property type="match status" value="1"/>
</dbReference>
<dbReference type="Pfam" id="PF01434">
    <property type="entry name" value="Peptidase_M41"/>
    <property type="match status" value="1"/>
</dbReference>
<dbReference type="SMART" id="SM00382">
    <property type="entry name" value="AAA"/>
    <property type="match status" value="1"/>
</dbReference>
<dbReference type="SUPFAM" id="SSF140990">
    <property type="entry name" value="FtsH protease domain-like"/>
    <property type="match status" value="1"/>
</dbReference>
<dbReference type="SUPFAM" id="SSF52540">
    <property type="entry name" value="P-loop containing nucleoside triphosphate hydrolases"/>
    <property type="match status" value="1"/>
</dbReference>
<dbReference type="PROSITE" id="PS00674">
    <property type="entry name" value="AAA"/>
    <property type="match status" value="1"/>
</dbReference>
<accession>Q2KJI7</accession>
<name>AFG32_BOVIN</name>
<proteinExistence type="evidence at transcript level"/>
<feature type="transit peptide" description="Mitochondrion" evidence="1">
    <location>
        <begin position="1"/>
        <end position="39"/>
    </location>
</feature>
<feature type="propeptide" id="PRO_0000442309" description="Removed in mature form" evidence="1">
    <location>
        <begin position="40"/>
        <end position="67"/>
    </location>
</feature>
<feature type="chain" id="PRO_0000442310" description="Mitochondrial inner membrane m-AAA protease component AFG3L2">
    <location>
        <begin position="68"/>
        <end position="805"/>
    </location>
</feature>
<feature type="transmembrane region" description="Helical" evidence="3">
    <location>
        <begin position="144"/>
        <end position="164"/>
    </location>
</feature>
<feature type="transmembrane region" description="Helical" evidence="3">
    <location>
        <begin position="252"/>
        <end position="272"/>
    </location>
</feature>
<feature type="region of interest" description="Disordered" evidence="4">
    <location>
        <begin position="74"/>
        <end position="127"/>
    </location>
</feature>
<feature type="region of interest" description="Disordered" evidence="4">
    <location>
        <begin position="760"/>
        <end position="805"/>
    </location>
</feature>
<feature type="compositionally biased region" description="Basic and acidic residues" evidence="4">
    <location>
        <begin position="86"/>
        <end position="101"/>
    </location>
</feature>
<feature type="compositionally biased region" description="Gly residues" evidence="4">
    <location>
        <begin position="109"/>
        <end position="118"/>
    </location>
</feature>
<feature type="compositionally biased region" description="Basic and acidic residues" evidence="4">
    <location>
        <begin position="776"/>
        <end position="787"/>
    </location>
</feature>
<feature type="active site" evidence="2">
    <location>
        <position position="576"/>
    </location>
</feature>
<feature type="binding site" evidence="2">
    <location>
        <position position="311"/>
    </location>
    <ligand>
        <name>ATP</name>
        <dbReference type="ChEBI" id="CHEBI:30616"/>
    </ligand>
</feature>
<feature type="binding site" evidence="2">
    <location>
        <position position="312"/>
    </location>
    <ligand>
        <name>ATP</name>
        <dbReference type="ChEBI" id="CHEBI:30616"/>
    </ligand>
</feature>
<feature type="binding site" evidence="2">
    <location>
        <position position="353"/>
    </location>
    <ligand>
        <name>ATP</name>
        <dbReference type="ChEBI" id="CHEBI:30616"/>
    </ligand>
</feature>
<feature type="binding site" evidence="2">
    <location>
        <position position="354"/>
    </location>
    <ligand>
        <name>ATP</name>
        <dbReference type="ChEBI" id="CHEBI:30616"/>
    </ligand>
</feature>
<feature type="binding site" evidence="2">
    <location>
        <position position="355"/>
    </location>
    <ligand>
        <name>ATP</name>
        <dbReference type="ChEBI" id="CHEBI:30616"/>
    </ligand>
</feature>
<feature type="binding site" evidence="2">
    <location>
        <position position="356"/>
    </location>
    <ligand>
        <name>ATP</name>
        <dbReference type="ChEBI" id="CHEBI:30616"/>
    </ligand>
</feature>
<feature type="binding site" evidence="2">
    <location>
        <position position="357"/>
    </location>
    <ligand>
        <name>ATP</name>
        <dbReference type="ChEBI" id="CHEBI:30616"/>
    </ligand>
</feature>
<feature type="binding site" evidence="2">
    <location>
        <position position="491"/>
    </location>
    <ligand>
        <name>ATP</name>
        <dbReference type="ChEBI" id="CHEBI:30616"/>
    </ligand>
</feature>
<feature type="binding site" evidence="2">
    <location>
        <position position="575"/>
    </location>
    <ligand>
        <name>Zn(2+)</name>
        <dbReference type="ChEBI" id="CHEBI:29105"/>
        <note>catalytic</note>
    </ligand>
</feature>
<feature type="binding site" evidence="2">
    <location>
        <position position="579"/>
    </location>
    <ligand>
        <name>Zn(2+)</name>
        <dbReference type="ChEBI" id="CHEBI:29105"/>
        <note>catalytic</note>
    </ligand>
</feature>
<feature type="binding site" evidence="2">
    <location>
        <position position="650"/>
    </location>
    <ligand>
        <name>Zn(2+)</name>
        <dbReference type="ChEBI" id="CHEBI:29105"/>
        <note>catalytic</note>
    </ligand>
</feature>
<feature type="modified residue" description="N6-succinyllysine" evidence="1">
    <location>
        <position position="118"/>
    </location>
</feature>
<reference key="1">
    <citation type="submission" date="2005-09" db="EMBL/GenBank/DDBJ databases">
        <authorList>
            <consortium name="NIH - Mammalian Gene Collection (MGC) project"/>
        </authorList>
    </citation>
    <scope>NUCLEOTIDE SEQUENCE [LARGE SCALE MRNA]</scope>
    <source>
        <strain>Crossbred X Angus</strain>
        <tissue>Ileum</tissue>
    </source>
</reference>
<organism>
    <name type="scientific">Bos taurus</name>
    <name type="common">Bovine</name>
    <dbReference type="NCBI Taxonomy" id="9913"/>
    <lineage>
        <taxon>Eukaryota</taxon>
        <taxon>Metazoa</taxon>
        <taxon>Chordata</taxon>
        <taxon>Craniata</taxon>
        <taxon>Vertebrata</taxon>
        <taxon>Euteleostomi</taxon>
        <taxon>Mammalia</taxon>
        <taxon>Eutheria</taxon>
        <taxon>Laurasiatheria</taxon>
        <taxon>Artiodactyla</taxon>
        <taxon>Ruminantia</taxon>
        <taxon>Pecora</taxon>
        <taxon>Bovidae</taxon>
        <taxon>Bovinae</taxon>
        <taxon>Bos</taxon>
    </lineage>
</organism>
<evidence type="ECO:0000250" key="1">
    <source>
        <dbReference type="UniProtKB" id="Q8JZQ2"/>
    </source>
</evidence>
<evidence type="ECO:0000250" key="2">
    <source>
        <dbReference type="UniProtKB" id="Q9Y4W6"/>
    </source>
</evidence>
<evidence type="ECO:0000255" key="3"/>
<evidence type="ECO:0000256" key="4">
    <source>
        <dbReference type="SAM" id="MobiDB-lite"/>
    </source>
</evidence>
<evidence type="ECO:0000305" key="5"/>
<gene>
    <name type="primary">AFG3L2</name>
</gene>
<protein>
    <recommendedName>
        <fullName evidence="5">Mitochondrial inner membrane m-AAA protease component AFG3L2</fullName>
        <ecNumber evidence="2">3.4.24.-</ecNumber>
        <ecNumber evidence="2">3.6.-.-</ecNumber>
    </recommendedName>
    <alternativeName>
        <fullName>AFG3-like protein 2</fullName>
    </alternativeName>
</protein>
<sequence>MAHRCLLLWGRGACRPRGMPPMLLPGGRTGSTERLYLRMLYRYATTQAKTSRNSLLTDVIAAYQRLCSRPPKGFEKYFPNGKNGKKTSEPKEVMGEKKEPKPAAAPRPSGGGVGGGGKRGGKKDDSHWWSRFQKGDIPWDDKEFKMYFLWTALFWGGFLFYFLFKSSGREITWKDFANNYLSKGVVDRLEVVNKRFVRVTFTPGKTPVDGQYVWFNIGSVDTFERNLETLQQELGIEGENRVPVVYIAESDGSFLLSMLPTVLIIAFLLYTIRRGPAGIGRTGRGMGGLFSVGETTAKVLKDEIDVKFKDVAGCEEAKLEIMEFVNFLKNPKQYQDLGAKIPKGAILTGPPGTGKTLLAKATAGEANVPFITVSGSEFLEMFVGVGPARVRDLFALARKNAPCILFIDEIDAVGRKRGRGNFGGQSEQENTLNQLLVEMDGFNTTTNVVILAGTNRPDILDPALMRPGRFDRQIFIGPPDIKGRASIFKVHLRPLKLDSTLEKEKLARKLASLTPGFSGADVANVCNEAALIAARHLSDSINQKHFEQAIERVIGGLEKKTQVLQPEEKKTVAYHEAGHAVAGWYLEHADPLLKVSIIPRGKGLGYAQYLPREQYLYTREQLLDRMCMTLGGRVSEEIFFGRITTGAQDDLRKVTQSAYAQIVQFGMNEKVGQISFDLPRQGDMVLEKPYSEATARLIDDEVRILINDAYKRTVALLTEKKADVEKVALLLLEKEVLDKNDMVELLGPRPFAEKSTYEEFVEGTGSLDEDTSLPEGLKDWNREREGSEEPSGEKVTSPVQGAGPA</sequence>
<keyword id="KW-0067">ATP-binding</keyword>
<keyword id="KW-0378">Hydrolase</keyword>
<keyword id="KW-0472">Membrane</keyword>
<keyword id="KW-0479">Metal-binding</keyword>
<keyword id="KW-0482">Metalloprotease</keyword>
<keyword id="KW-0496">Mitochondrion</keyword>
<keyword id="KW-0999">Mitochondrion inner membrane</keyword>
<keyword id="KW-0547">Nucleotide-binding</keyword>
<keyword id="KW-0645">Protease</keyword>
<keyword id="KW-1185">Reference proteome</keyword>
<keyword id="KW-0809">Transit peptide</keyword>
<keyword id="KW-0812">Transmembrane</keyword>
<keyword id="KW-1133">Transmembrane helix</keyword>
<keyword id="KW-0862">Zinc</keyword>
<comment type="function">
    <text evidence="2">Catalytic component of the m-AAA protease, a protease that plays a key role in proteostasis of inner mitochondrial membrane proteins, and which is essential for axonal and neuron development. AFG3L2 possesses both ATPase and protease activities: the ATPase activity is required to unfold substrates, threading them into the internal proteolytic cavity for hydrolysis into small peptide fragments. The m-AAA protease carries out protein quality control in the inner membrane of the mitochondria by mediating degradation of mistranslated or misfolded polypeptides. The m-AAA protease complex also promotes the processing and maturation of mitochondrial proteins, such as MRPL32/bL32m, PINK1 and SP7. Mediates protein maturation of the mitochondrial ribosomal subunit MRPL32/bL32m by catalyzing the cleavage of the presequence of MRPL32/bL32m prior to assembly into the mitochondrial ribosome. Required for SPG7 maturation into its active mature form after SPG7 cleavage by mitochondrial-processing peptidase (MPP). Required for the maturation of PINK1 into its 52kDa mature form after its cleavage by mitochondrial-processing peptidase (MPP). Acts as a regulator of calcium in neurons by mediating degradation of SMDT1/EMRE before its assembly with the uniporter complex, limiting the availability of SMDT1/EMRE for MCU assembly and promoting efficient assembly of gatekeeper subunits with MCU. Promotes the proteolytic degradation of GHITM upon hyperpolarization of mitochondria: progressive GHITM degradation leads to respiratory complex I degradation and broad reshaping of the mitochondrial proteome by AFG3L2. Also acts as a regulator of mitochondrial glutathione homeostasis by mediating cleavage and degradation of SLC25A39. SLC25A39 cleavage is prevented when SLC25A39 binds iron-sulfur. Involved in the regulation of OMA1-dependent processing of OPA1. May act by mediating processing of OMA1 precursor, participating in OMA1 maturation.</text>
</comment>
<comment type="catalytic activity">
    <reaction evidence="2">
        <text>ATP + H2O = ADP + phosphate + H(+)</text>
        <dbReference type="Rhea" id="RHEA:13065"/>
        <dbReference type="ChEBI" id="CHEBI:15377"/>
        <dbReference type="ChEBI" id="CHEBI:15378"/>
        <dbReference type="ChEBI" id="CHEBI:30616"/>
        <dbReference type="ChEBI" id="CHEBI:43474"/>
        <dbReference type="ChEBI" id="CHEBI:456216"/>
    </reaction>
    <physiologicalReaction direction="left-to-right" evidence="2">
        <dbReference type="Rhea" id="RHEA:13066"/>
    </physiologicalReaction>
</comment>
<comment type="cofactor">
    <cofactor evidence="2">
        <name>Zn(2+)</name>
        <dbReference type="ChEBI" id="CHEBI:29105"/>
    </cofactor>
    <text evidence="2">Binds 1 zinc ion per subunit.</text>
</comment>
<comment type="subunit">
    <text evidence="1 2">Homohexamer. Forms heterohexamers with SPG7. The m-AAA protease is either composed of homohexamers of AFG3L2 or heterohexamers of AFG3L2 and SPG7. Interacts with MAIP1 (By similarity). Interacts with DNAJC19. Interacts with PHB2 (By similarity).</text>
</comment>
<comment type="subcellular location">
    <subcellularLocation>
        <location evidence="2">Mitochondrion inner membrane</location>
        <topology evidence="3">Multi-pass membrane protein</topology>
    </subcellularLocation>
</comment>
<comment type="PTM">
    <text evidence="2">Upon import into the mitochondrion, the N-terminal transit peptide is cleaved to generate an intermediate form which undergoes autocatalytic proteolytic processing to generate the proteolytically active mature form.</text>
</comment>
<comment type="similarity">
    <text evidence="5">In the N-terminal section; belongs to the AAA ATPase family.</text>
</comment>
<comment type="similarity">
    <text evidence="5">In the C-terminal section; belongs to the peptidase M41 family.</text>
</comment>